<organism>
    <name type="scientific">Cyanidium caldarium</name>
    <name type="common">Red alga</name>
    <dbReference type="NCBI Taxonomy" id="2771"/>
    <lineage>
        <taxon>Eukaryota</taxon>
        <taxon>Rhodophyta</taxon>
        <taxon>Bangiophyceae</taxon>
        <taxon>Cyanidiales</taxon>
        <taxon>Cyanidiaceae</taxon>
        <taxon>Cyanidium</taxon>
    </lineage>
</organism>
<sequence>MVSITLKTNRIFRSCLNLATNLKFSITLFIIICIVSAIGTIIPQDKPKEFYMNTYSLKVLGMPLWKIIQLLSLEKIFYSNFYLILLLCLSFSLFFCSLKSQFPYLRTSRIIKLNNNNPPTSPLHESKKIKYNNIASKNDSSCVQLVSQGYKIYTFDKNLDKAGPLLIHLSLILILLGSAIHAFNDFIAQEMIPIYEVSHIQNVISSGRISKIPQTISLKASAFTVEHENEKVVKQFITNLAMLNSKGEVLKQGLVSVNHPLVYKQVYIFQMDWKLFGIRVNYGKNKIYEFPVQKIEANNEQQWSCTIPAKNQSKLILIFKNMSDEFYVYDNNQNFLKIGKINTPQLIRNTYFTVISKISGTGLQIKKDSSINIVYTGFLLLIIGLVINHKGSKKRT</sequence>
<gene>
    <name evidence="1" type="primary">ccs1</name>
    <name type="synonym">ycf14</name>
    <name type="synonym">ycf44</name>
</gene>
<name>CCS1_CYACA</name>
<dbReference type="EMBL" id="AF022186">
    <property type="protein sequence ID" value="AAB82676.1"/>
    <property type="molecule type" value="Genomic_DNA"/>
</dbReference>
<dbReference type="PIR" id="T11981">
    <property type="entry name" value="T11981"/>
</dbReference>
<dbReference type="RefSeq" id="NP_045085.1">
    <property type="nucleotide sequence ID" value="NC_001840.1"/>
</dbReference>
<dbReference type="SMR" id="O19913"/>
<dbReference type="GeneID" id="800109"/>
<dbReference type="GO" id="GO:0009535">
    <property type="term" value="C:chloroplast thylakoid membrane"/>
    <property type="evidence" value="ECO:0007669"/>
    <property type="project" value="UniProtKB-SubCell"/>
</dbReference>
<dbReference type="GO" id="GO:0017004">
    <property type="term" value="P:cytochrome complex assembly"/>
    <property type="evidence" value="ECO:0007669"/>
    <property type="project" value="UniProtKB-UniRule"/>
</dbReference>
<dbReference type="HAMAP" id="MF_01392">
    <property type="entry name" value="CytC_Ccs1"/>
    <property type="match status" value="1"/>
</dbReference>
<dbReference type="InterPro" id="IPR023494">
    <property type="entry name" value="Cyt_c_bgen_Ccs1/CcsB/ResB"/>
</dbReference>
<dbReference type="InterPro" id="IPR007816">
    <property type="entry name" value="ResB-like_domain"/>
</dbReference>
<dbReference type="PANTHER" id="PTHR31566">
    <property type="entry name" value="CYTOCHROME C BIOGENESIS PROTEIN CCS1, CHLOROPLASTIC"/>
    <property type="match status" value="1"/>
</dbReference>
<dbReference type="PANTHER" id="PTHR31566:SF0">
    <property type="entry name" value="CYTOCHROME C BIOGENESIS PROTEIN CCS1, CHLOROPLASTIC"/>
    <property type="match status" value="1"/>
</dbReference>
<dbReference type="Pfam" id="PF05140">
    <property type="entry name" value="ResB"/>
    <property type="match status" value="1"/>
</dbReference>
<protein>
    <recommendedName>
        <fullName evidence="1">Cytochrome c biogenesis protein Ccs1</fullName>
    </recommendedName>
</protein>
<geneLocation type="chloroplast"/>
<feature type="chain" id="PRO_0000217361" description="Cytochrome c biogenesis protein Ccs1">
    <location>
        <begin position="1"/>
        <end position="396"/>
    </location>
</feature>
<feature type="transmembrane region" description="Helical" evidence="1">
    <location>
        <begin position="22"/>
        <end position="42"/>
    </location>
</feature>
<feature type="transmembrane region" description="Helical" evidence="1">
    <location>
        <begin position="79"/>
        <end position="99"/>
    </location>
</feature>
<feature type="transmembrane region" description="Helical" evidence="1">
    <location>
        <begin position="162"/>
        <end position="182"/>
    </location>
</feature>
<reference key="1">
    <citation type="journal article" date="2000" name="J. Mol. Evol.">
        <title>The structure and gene repertoire of an ancient red algal plastid genome.</title>
        <authorList>
            <person name="Gloeckner G."/>
            <person name="Rosenthal A."/>
            <person name="Valentin K.-U."/>
        </authorList>
    </citation>
    <scope>NUCLEOTIDE SEQUENCE [LARGE SCALE GENOMIC DNA]</scope>
    <source>
        <strain>RK-1</strain>
    </source>
</reference>
<evidence type="ECO:0000255" key="1">
    <source>
        <dbReference type="HAMAP-Rule" id="MF_01392"/>
    </source>
</evidence>
<comment type="function">
    <text evidence="1">Required during biogenesis of c-type cytochromes (cytochrome c6 and cytochrome f) at the step of heme attachment.</text>
</comment>
<comment type="subunit">
    <text evidence="1">May interact with CcsA.</text>
</comment>
<comment type="subcellular location">
    <subcellularLocation>
        <location evidence="1">Plastid</location>
        <location evidence="1">Chloroplast thylakoid membrane</location>
        <topology evidence="1">Multi-pass membrane protein</topology>
    </subcellularLocation>
</comment>
<comment type="similarity">
    <text evidence="1">Belongs to the Ccs1/CcsB family.</text>
</comment>
<accession>O19913</accession>
<proteinExistence type="inferred from homology"/>
<keyword id="KW-0150">Chloroplast</keyword>
<keyword id="KW-0201">Cytochrome c-type biogenesis</keyword>
<keyword id="KW-0472">Membrane</keyword>
<keyword id="KW-0934">Plastid</keyword>
<keyword id="KW-0793">Thylakoid</keyword>
<keyword id="KW-0812">Transmembrane</keyword>
<keyword id="KW-1133">Transmembrane helix</keyword>